<feature type="chain" id="PRO_0000119542" description="Glutamate--tRNA ligase">
    <location>
        <begin position="1"/>
        <end position="506"/>
    </location>
</feature>
<feature type="short sequence motif" description="'HIGH' region" evidence="1">
    <location>
        <begin position="12"/>
        <end position="22"/>
    </location>
</feature>
<feature type="short sequence motif" description="'KMSKS' region" evidence="1">
    <location>
        <begin position="253"/>
        <end position="257"/>
    </location>
</feature>
<feature type="binding site" evidence="1">
    <location>
        <position position="256"/>
    </location>
    <ligand>
        <name>ATP</name>
        <dbReference type="ChEBI" id="CHEBI:30616"/>
    </ligand>
</feature>
<sequence length="506" mass="58511">MTVQNVRVRVAPSPTGDPHVGTAYMALFNEVFARKYNGQMILRIEDTDQTRSRDDYEANIFSALKWCGIRWDEGPDVGGAYGPYRQSERTEIYKKYAEILLQTDCAYKCFATPQELQEMRAVASTLGYRGGYDRRYRYLSPEEVRQREEQGQPYTIRLKVPLTGESVFEDQCKGCVVFPWADVDDQVLVKSDGFPTYHFANVVDDHLMGITHVLRGEEWLSSTPKHLLLYEAFGWEPPQFFHMPLLLNPDGSKLSKRKNPTSIFYYRDAGYKKEAFMNFLTLMGYSMEGDEEIYSMQRLIEAFDPKRIGRSGAVFDIRKLDWMNKHYLNHEGSPESLLQELKGWLWNDEFLLKILPLCQSRITTLADFVGLTSFFFTAIPQYSKEELLPSSLKQEQAAVMLYSLVKYLEKKDLWEKDFFYQGSKWLAEAFQVHHKKAVIPLLYVAITGAKQGLPLFDSMELLGKARTRARLTYAQNLLGGVSKKVQQQVDKALQDQPLEDIRFLDF</sequence>
<comment type="function">
    <text evidence="1">Catalyzes the attachment of glutamate to tRNA(Glu) in a two-step reaction: glutamate is first activated by ATP to form Glu-AMP and then transferred to the acceptor end of tRNA(Glu).</text>
</comment>
<comment type="catalytic activity">
    <reaction evidence="1">
        <text>tRNA(Glu) + L-glutamate + ATP = L-glutamyl-tRNA(Glu) + AMP + diphosphate</text>
        <dbReference type="Rhea" id="RHEA:23540"/>
        <dbReference type="Rhea" id="RHEA-COMP:9663"/>
        <dbReference type="Rhea" id="RHEA-COMP:9680"/>
        <dbReference type="ChEBI" id="CHEBI:29985"/>
        <dbReference type="ChEBI" id="CHEBI:30616"/>
        <dbReference type="ChEBI" id="CHEBI:33019"/>
        <dbReference type="ChEBI" id="CHEBI:78442"/>
        <dbReference type="ChEBI" id="CHEBI:78520"/>
        <dbReference type="ChEBI" id="CHEBI:456215"/>
        <dbReference type="EC" id="6.1.1.17"/>
    </reaction>
</comment>
<comment type="subunit">
    <text evidence="1">Monomer.</text>
</comment>
<comment type="subcellular location">
    <subcellularLocation>
        <location evidence="1">Cytoplasm</location>
    </subcellularLocation>
</comment>
<comment type="similarity">
    <text evidence="1">Belongs to the class-I aminoacyl-tRNA synthetase family. Glutamate--tRNA ligase type 1 subfamily.</text>
</comment>
<accession>O84451</accession>
<gene>
    <name evidence="1" type="primary">gltX</name>
    <name type="ordered locus">CT_445</name>
</gene>
<keyword id="KW-0030">Aminoacyl-tRNA synthetase</keyword>
<keyword id="KW-0067">ATP-binding</keyword>
<keyword id="KW-0963">Cytoplasm</keyword>
<keyword id="KW-0436">Ligase</keyword>
<keyword id="KW-0547">Nucleotide-binding</keyword>
<keyword id="KW-0648">Protein biosynthesis</keyword>
<keyword id="KW-1185">Reference proteome</keyword>
<organism>
    <name type="scientific">Chlamydia trachomatis serovar D (strain ATCC VR-885 / DSM 19411 / UW-3/Cx)</name>
    <dbReference type="NCBI Taxonomy" id="272561"/>
    <lineage>
        <taxon>Bacteria</taxon>
        <taxon>Pseudomonadati</taxon>
        <taxon>Chlamydiota</taxon>
        <taxon>Chlamydiia</taxon>
        <taxon>Chlamydiales</taxon>
        <taxon>Chlamydiaceae</taxon>
        <taxon>Chlamydia/Chlamydophila group</taxon>
        <taxon>Chlamydia</taxon>
    </lineage>
</organism>
<name>SYE_CHLTR</name>
<protein>
    <recommendedName>
        <fullName evidence="1">Glutamate--tRNA ligase</fullName>
        <ecNumber evidence="1">6.1.1.17</ecNumber>
    </recommendedName>
    <alternativeName>
        <fullName evidence="1">Glutamyl-tRNA synthetase</fullName>
        <shortName evidence="1">GluRS</shortName>
    </alternativeName>
</protein>
<evidence type="ECO:0000255" key="1">
    <source>
        <dbReference type="HAMAP-Rule" id="MF_00022"/>
    </source>
</evidence>
<dbReference type="EC" id="6.1.1.17" evidence="1"/>
<dbReference type="EMBL" id="AE001273">
    <property type="protein sequence ID" value="AAC68044.1"/>
    <property type="molecule type" value="Genomic_DNA"/>
</dbReference>
<dbReference type="PIR" id="F71513">
    <property type="entry name" value="F71513"/>
</dbReference>
<dbReference type="RefSeq" id="NP_219958.1">
    <property type="nucleotide sequence ID" value="NC_000117.1"/>
</dbReference>
<dbReference type="RefSeq" id="WP_009871801.1">
    <property type="nucleotide sequence ID" value="NC_000117.1"/>
</dbReference>
<dbReference type="SMR" id="O84451"/>
<dbReference type="FunCoup" id="O84451">
    <property type="interactions" value="269"/>
</dbReference>
<dbReference type="STRING" id="272561.CT_445"/>
<dbReference type="EnsemblBacteria" id="AAC68044">
    <property type="protein sequence ID" value="AAC68044"/>
    <property type="gene ID" value="CT_445"/>
</dbReference>
<dbReference type="GeneID" id="884218"/>
<dbReference type="KEGG" id="ctr:CT_445"/>
<dbReference type="PATRIC" id="fig|272561.5.peg.481"/>
<dbReference type="HOGENOM" id="CLU_015768_6_3_0"/>
<dbReference type="InParanoid" id="O84451"/>
<dbReference type="OrthoDB" id="9807503at2"/>
<dbReference type="Proteomes" id="UP000000431">
    <property type="component" value="Chromosome"/>
</dbReference>
<dbReference type="GO" id="GO:0005829">
    <property type="term" value="C:cytosol"/>
    <property type="evidence" value="ECO:0000318"/>
    <property type="project" value="GO_Central"/>
</dbReference>
<dbReference type="GO" id="GO:0005524">
    <property type="term" value="F:ATP binding"/>
    <property type="evidence" value="ECO:0007669"/>
    <property type="project" value="UniProtKB-UniRule"/>
</dbReference>
<dbReference type="GO" id="GO:0004818">
    <property type="term" value="F:glutamate-tRNA ligase activity"/>
    <property type="evidence" value="ECO:0000318"/>
    <property type="project" value="GO_Central"/>
</dbReference>
<dbReference type="GO" id="GO:0000049">
    <property type="term" value="F:tRNA binding"/>
    <property type="evidence" value="ECO:0007669"/>
    <property type="project" value="InterPro"/>
</dbReference>
<dbReference type="GO" id="GO:0008270">
    <property type="term" value="F:zinc ion binding"/>
    <property type="evidence" value="ECO:0007669"/>
    <property type="project" value="InterPro"/>
</dbReference>
<dbReference type="GO" id="GO:0006424">
    <property type="term" value="P:glutamyl-tRNA aminoacylation"/>
    <property type="evidence" value="ECO:0000318"/>
    <property type="project" value="GO_Central"/>
</dbReference>
<dbReference type="CDD" id="cd00808">
    <property type="entry name" value="GluRS_core"/>
    <property type="match status" value="1"/>
</dbReference>
<dbReference type="FunFam" id="1.10.10.350:FF:000014">
    <property type="entry name" value="Glutamate--tRNA ligase"/>
    <property type="match status" value="1"/>
</dbReference>
<dbReference type="FunFam" id="3.40.50.620:FF:000329">
    <property type="entry name" value="Glutamate--tRNA ligase"/>
    <property type="match status" value="1"/>
</dbReference>
<dbReference type="Gene3D" id="1.10.10.350">
    <property type="match status" value="1"/>
</dbReference>
<dbReference type="Gene3D" id="3.40.50.620">
    <property type="entry name" value="HUPs"/>
    <property type="match status" value="1"/>
</dbReference>
<dbReference type="HAMAP" id="MF_00022">
    <property type="entry name" value="Glu_tRNA_synth_type1"/>
    <property type="match status" value="1"/>
</dbReference>
<dbReference type="InterPro" id="IPR045462">
    <property type="entry name" value="aa-tRNA-synth_I_cd-bd"/>
</dbReference>
<dbReference type="InterPro" id="IPR020751">
    <property type="entry name" value="aa-tRNA-synth_I_codon-bd_sub2"/>
</dbReference>
<dbReference type="InterPro" id="IPR001412">
    <property type="entry name" value="aa-tRNA-synth_I_CS"/>
</dbReference>
<dbReference type="InterPro" id="IPR008925">
    <property type="entry name" value="aa_tRNA-synth_I_cd-bd_sf"/>
</dbReference>
<dbReference type="InterPro" id="IPR004527">
    <property type="entry name" value="Glu-tRNA-ligase_bac/mito"/>
</dbReference>
<dbReference type="InterPro" id="IPR000924">
    <property type="entry name" value="Glu/Gln-tRNA-synth"/>
</dbReference>
<dbReference type="InterPro" id="IPR020058">
    <property type="entry name" value="Glu/Gln-tRNA-synth_Ib_cat-dom"/>
</dbReference>
<dbReference type="InterPro" id="IPR049940">
    <property type="entry name" value="GluQ/Sye"/>
</dbReference>
<dbReference type="InterPro" id="IPR033910">
    <property type="entry name" value="GluRS_core"/>
</dbReference>
<dbReference type="InterPro" id="IPR014729">
    <property type="entry name" value="Rossmann-like_a/b/a_fold"/>
</dbReference>
<dbReference type="NCBIfam" id="TIGR00464">
    <property type="entry name" value="gltX_bact"/>
    <property type="match status" value="1"/>
</dbReference>
<dbReference type="PANTHER" id="PTHR43311">
    <property type="entry name" value="GLUTAMATE--TRNA LIGASE"/>
    <property type="match status" value="1"/>
</dbReference>
<dbReference type="PANTHER" id="PTHR43311:SF2">
    <property type="entry name" value="GLUTAMATE--TRNA LIGASE, MITOCHONDRIAL-RELATED"/>
    <property type="match status" value="1"/>
</dbReference>
<dbReference type="Pfam" id="PF19269">
    <property type="entry name" value="Anticodon_2"/>
    <property type="match status" value="1"/>
</dbReference>
<dbReference type="Pfam" id="PF00749">
    <property type="entry name" value="tRNA-synt_1c"/>
    <property type="match status" value="1"/>
</dbReference>
<dbReference type="PRINTS" id="PR00987">
    <property type="entry name" value="TRNASYNTHGLU"/>
</dbReference>
<dbReference type="SUPFAM" id="SSF48163">
    <property type="entry name" value="An anticodon-binding domain of class I aminoacyl-tRNA synthetases"/>
    <property type="match status" value="1"/>
</dbReference>
<dbReference type="SUPFAM" id="SSF52374">
    <property type="entry name" value="Nucleotidylyl transferase"/>
    <property type="match status" value="1"/>
</dbReference>
<dbReference type="PROSITE" id="PS00178">
    <property type="entry name" value="AA_TRNA_LIGASE_I"/>
    <property type="match status" value="1"/>
</dbReference>
<proteinExistence type="inferred from homology"/>
<reference key="1">
    <citation type="journal article" date="1998" name="Science">
        <title>Genome sequence of an obligate intracellular pathogen of humans: Chlamydia trachomatis.</title>
        <authorList>
            <person name="Stephens R.S."/>
            <person name="Kalman S."/>
            <person name="Lammel C.J."/>
            <person name="Fan J."/>
            <person name="Marathe R."/>
            <person name="Aravind L."/>
            <person name="Mitchell W.P."/>
            <person name="Olinger L."/>
            <person name="Tatusov R.L."/>
            <person name="Zhao Q."/>
            <person name="Koonin E.V."/>
            <person name="Davis R.W."/>
        </authorList>
    </citation>
    <scope>NUCLEOTIDE SEQUENCE [LARGE SCALE GENOMIC DNA]</scope>
    <source>
        <strain>ATCC VR-885 / DSM 19411 / UW-3/Cx</strain>
    </source>
</reference>